<reference key="1">
    <citation type="journal article" date="2010" name="J. Bacteriol.">
        <title>Genome sequence of the dioxin-mineralizing bacterium Sphingomonas wittichii RW1.</title>
        <authorList>
            <person name="Miller T.R."/>
            <person name="Delcher A.L."/>
            <person name="Salzberg S.L."/>
            <person name="Saunders E."/>
            <person name="Detter J.C."/>
            <person name="Halden R.U."/>
        </authorList>
    </citation>
    <scope>NUCLEOTIDE SEQUENCE [LARGE SCALE GENOMIC DNA]</scope>
    <source>
        <strain>DSM 6014 / CCUG 31198 / JCM 15750 / NBRC 105917 / EY 4224 / RW1</strain>
    </source>
</reference>
<name>EFG_RHIWR</name>
<protein>
    <recommendedName>
        <fullName evidence="1">Elongation factor G</fullName>
        <shortName evidence="1">EF-G</shortName>
    </recommendedName>
</protein>
<accession>A5V605</accession>
<proteinExistence type="inferred from homology"/>
<evidence type="ECO:0000255" key="1">
    <source>
        <dbReference type="HAMAP-Rule" id="MF_00054"/>
    </source>
</evidence>
<sequence>MARSHPLEKYRNIGIMAHIDAGKTTTTERILYYTGKSYKIGEVHEGTATMDWMEQEQERGITITSAATTCFWNDHRINIIDTPGHVDFTIEVERSLRVLDGAVTAFDGVAGVEPQSETVWRQADKYRVPRMCYVNKLDRTGANFQRCVQMIKDRLGARPAVLYLPIGIESSFVGLVDLVENRAIVWLEESLGAKFEYRDIPDDMKDEAAVARQELIELAVEQDEAAMESYLEGNEPDVATLKALLRKGTLAFDFVPVLCGSSFKNKGVQPLLDAVVDYLPSPLDIPDVQGVKLDGETPDSRPAEDSAPMSALAFKIMNDPFVGSLTFARIYSGKLEKGTYLNSVKDKKEKIGRMLLMHANSREDIEEAYAGDIVALAGLKETTTGDTLCAPSAPIILERMEFPDPVIELSVEPKTKADQEKMGIALNRLAAEDPSFRVSSDHESGQTIIKGMGELHLEILVDRMKREFKVEANVGAPQVAYREYLKKPVELVYTHKKQSGGSGQFGEVKVQVKPGERGSGFVFVDEVKGGNIPREYIPSVEKGMRETAEGGSLIGFPIVDVEVHLIDGKYHDVDSSALAFEITGRGAMREAAQKAGITILEPIMKVEVVTPEDYLGDVIGDMNSRRGQIQGTDSRGNAQVVEAMVPLANMFGYVNQLRSFTQGRAQYSMQFSHYDEVPANVADEVKAKLA</sequence>
<comment type="function">
    <text evidence="1">Catalyzes the GTP-dependent ribosomal translocation step during translation elongation. During this step, the ribosome changes from the pre-translocational (PRE) to the post-translocational (POST) state as the newly formed A-site-bound peptidyl-tRNA and P-site-bound deacylated tRNA move to the P and E sites, respectively. Catalyzes the coordinated movement of the two tRNA molecules, the mRNA and conformational changes in the ribosome.</text>
</comment>
<comment type="subcellular location">
    <subcellularLocation>
        <location evidence="1">Cytoplasm</location>
    </subcellularLocation>
</comment>
<comment type="similarity">
    <text evidence="1">Belongs to the TRAFAC class translation factor GTPase superfamily. Classic translation factor GTPase family. EF-G/EF-2 subfamily.</text>
</comment>
<dbReference type="EMBL" id="CP000699">
    <property type="protein sequence ID" value="ABQ67721.1"/>
    <property type="molecule type" value="Genomic_DNA"/>
</dbReference>
<dbReference type="SMR" id="A5V605"/>
<dbReference type="STRING" id="392499.Swit_1356"/>
<dbReference type="PaxDb" id="392499-Swit_1356"/>
<dbReference type="KEGG" id="swi:Swit_1356"/>
<dbReference type="eggNOG" id="COG0480">
    <property type="taxonomic scope" value="Bacteria"/>
</dbReference>
<dbReference type="HOGENOM" id="CLU_002794_4_1_5"/>
<dbReference type="OrthoDB" id="9802948at2"/>
<dbReference type="Proteomes" id="UP000001989">
    <property type="component" value="Chromosome"/>
</dbReference>
<dbReference type="GO" id="GO:0005737">
    <property type="term" value="C:cytoplasm"/>
    <property type="evidence" value="ECO:0007669"/>
    <property type="project" value="UniProtKB-SubCell"/>
</dbReference>
<dbReference type="GO" id="GO:0005525">
    <property type="term" value="F:GTP binding"/>
    <property type="evidence" value="ECO:0007669"/>
    <property type="project" value="UniProtKB-UniRule"/>
</dbReference>
<dbReference type="GO" id="GO:0003924">
    <property type="term" value="F:GTPase activity"/>
    <property type="evidence" value="ECO:0007669"/>
    <property type="project" value="InterPro"/>
</dbReference>
<dbReference type="GO" id="GO:0003746">
    <property type="term" value="F:translation elongation factor activity"/>
    <property type="evidence" value="ECO:0007669"/>
    <property type="project" value="UniProtKB-UniRule"/>
</dbReference>
<dbReference type="GO" id="GO:0032790">
    <property type="term" value="P:ribosome disassembly"/>
    <property type="evidence" value="ECO:0007669"/>
    <property type="project" value="TreeGrafter"/>
</dbReference>
<dbReference type="CDD" id="cd01886">
    <property type="entry name" value="EF-G"/>
    <property type="match status" value="1"/>
</dbReference>
<dbReference type="CDD" id="cd16262">
    <property type="entry name" value="EFG_III"/>
    <property type="match status" value="1"/>
</dbReference>
<dbReference type="CDD" id="cd01434">
    <property type="entry name" value="EFG_mtEFG1_IV"/>
    <property type="match status" value="1"/>
</dbReference>
<dbReference type="CDD" id="cd03713">
    <property type="entry name" value="EFG_mtEFG_C"/>
    <property type="match status" value="1"/>
</dbReference>
<dbReference type="CDD" id="cd04088">
    <property type="entry name" value="EFG_mtEFG_II"/>
    <property type="match status" value="1"/>
</dbReference>
<dbReference type="FunFam" id="2.40.30.10:FF:000006">
    <property type="entry name" value="Elongation factor G"/>
    <property type="match status" value="1"/>
</dbReference>
<dbReference type="FunFam" id="3.30.230.10:FF:000003">
    <property type="entry name" value="Elongation factor G"/>
    <property type="match status" value="1"/>
</dbReference>
<dbReference type="FunFam" id="3.30.70.240:FF:000001">
    <property type="entry name" value="Elongation factor G"/>
    <property type="match status" value="1"/>
</dbReference>
<dbReference type="FunFam" id="3.30.70.870:FF:000001">
    <property type="entry name" value="Elongation factor G"/>
    <property type="match status" value="1"/>
</dbReference>
<dbReference type="FunFam" id="3.40.50.300:FF:000029">
    <property type="entry name" value="Elongation factor G"/>
    <property type="match status" value="1"/>
</dbReference>
<dbReference type="Gene3D" id="3.30.230.10">
    <property type="match status" value="1"/>
</dbReference>
<dbReference type="Gene3D" id="3.30.70.240">
    <property type="match status" value="1"/>
</dbReference>
<dbReference type="Gene3D" id="3.30.70.870">
    <property type="entry name" value="Elongation Factor G (Translational Gtpase), domain 3"/>
    <property type="match status" value="1"/>
</dbReference>
<dbReference type="Gene3D" id="3.40.50.300">
    <property type="entry name" value="P-loop containing nucleotide triphosphate hydrolases"/>
    <property type="match status" value="1"/>
</dbReference>
<dbReference type="Gene3D" id="2.40.30.10">
    <property type="entry name" value="Translation factors"/>
    <property type="match status" value="1"/>
</dbReference>
<dbReference type="HAMAP" id="MF_00054_B">
    <property type="entry name" value="EF_G_EF_2_B"/>
    <property type="match status" value="1"/>
</dbReference>
<dbReference type="InterPro" id="IPR053905">
    <property type="entry name" value="EF-G-like_DII"/>
</dbReference>
<dbReference type="InterPro" id="IPR041095">
    <property type="entry name" value="EFG_II"/>
</dbReference>
<dbReference type="InterPro" id="IPR009022">
    <property type="entry name" value="EFG_III"/>
</dbReference>
<dbReference type="InterPro" id="IPR035647">
    <property type="entry name" value="EFG_III/V"/>
</dbReference>
<dbReference type="InterPro" id="IPR047872">
    <property type="entry name" value="EFG_IV"/>
</dbReference>
<dbReference type="InterPro" id="IPR035649">
    <property type="entry name" value="EFG_V"/>
</dbReference>
<dbReference type="InterPro" id="IPR000640">
    <property type="entry name" value="EFG_V-like"/>
</dbReference>
<dbReference type="InterPro" id="IPR031157">
    <property type="entry name" value="G_TR_CS"/>
</dbReference>
<dbReference type="InterPro" id="IPR027417">
    <property type="entry name" value="P-loop_NTPase"/>
</dbReference>
<dbReference type="InterPro" id="IPR020568">
    <property type="entry name" value="Ribosomal_Su5_D2-typ_SF"/>
</dbReference>
<dbReference type="InterPro" id="IPR014721">
    <property type="entry name" value="Ribsml_uS5_D2-typ_fold_subgr"/>
</dbReference>
<dbReference type="InterPro" id="IPR005225">
    <property type="entry name" value="Small_GTP-bd"/>
</dbReference>
<dbReference type="InterPro" id="IPR000795">
    <property type="entry name" value="T_Tr_GTP-bd_dom"/>
</dbReference>
<dbReference type="InterPro" id="IPR009000">
    <property type="entry name" value="Transl_B-barrel_sf"/>
</dbReference>
<dbReference type="InterPro" id="IPR004540">
    <property type="entry name" value="Transl_elong_EFG/EF2"/>
</dbReference>
<dbReference type="InterPro" id="IPR005517">
    <property type="entry name" value="Transl_elong_EFG/EF2_IV"/>
</dbReference>
<dbReference type="NCBIfam" id="TIGR00484">
    <property type="entry name" value="EF-G"/>
    <property type="match status" value="1"/>
</dbReference>
<dbReference type="NCBIfam" id="NF009379">
    <property type="entry name" value="PRK12740.1-3"/>
    <property type="match status" value="1"/>
</dbReference>
<dbReference type="NCBIfam" id="NF009381">
    <property type="entry name" value="PRK12740.1-5"/>
    <property type="match status" value="1"/>
</dbReference>
<dbReference type="NCBIfam" id="TIGR00231">
    <property type="entry name" value="small_GTP"/>
    <property type="match status" value="1"/>
</dbReference>
<dbReference type="PANTHER" id="PTHR43261:SF1">
    <property type="entry name" value="RIBOSOME-RELEASING FACTOR 2, MITOCHONDRIAL"/>
    <property type="match status" value="1"/>
</dbReference>
<dbReference type="PANTHER" id="PTHR43261">
    <property type="entry name" value="TRANSLATION ELONGATION FACTOR G-RELATED"/>
    <property type="match status" value="1"/>
</dbReference>
<dbReference type="Pfam" id="PF22042">
    <property type="entry name" value="EF-G_D2"/>
    <property type="match status" value="1"/>
</dbReference>
<dbReference type="Pfam" id="PF00679">
    <property type="entry name" value="EFG_C"/>
    <property type="match status" value="1"/>
</dbReference>
<dbReference type="Pfam" id="PF14492">
    <property type="entry name" value="EFG_III"/>
    <property type="match status" value="1"/>
</dbReference>
<dbReference type="Pfam" id="PF03764">
    <property type="entry name" value="EFG_IV"/>
    <property type="match status" value="1"/>
</dbReference>
<dbReference type="Pfam" id="PF00009">
    <property type="entry name" value="GTP_EFTU"/>
    <property type="match status" value="1"/>
</dbReference>
<dbReference type="PRINTS" id="PR00315">
    <property type="entry name" value="ELONGATNFCT"/>
</dbReference>
<dbReference type="SMART" id="SM00838">
    <property type="entry name" value="EFG_C"/>
    <property type="match status" value="1"/>
</dbReference>
<dbReference type="SMART" id="SM00889">
    <property type="entry name" value="EFG_IV"/>
    <property type="match status" value="1"/>
</dbReference>
<dbReference type="SUPFAM" id="SSF54980">
    <property type="entry name" value="EF-G C-terminal domain-like"/>
    <property type="match status" value="2"/>
</dbReference>
<dbReference type="SUPFAM" id="SSF52540">
    <property type="entry name" value="P-loop containing nucleoside triphosphate hydrolases"/>
    <property type="match status" value="1"/>
</dbReference>
<dbReference type="SUPFAM" id="SSF54211">
    <property type="entry name" value="Ribosomal protein S5 domain 2-like"/>
    <property type="match status" value="1"/>
</dbReference>
<dbReference type="SUPFAM" id="SSF50447">
    <property type="entry name" value="Translation proteins"/>
    <property type="match status" value="1"/>
</dbReference>
<dbReference type="PROSITE" id="PS00301">
    <property type="entry name" value="G_TR_1"/>
    <property type="match status" value="1"/>
</dbReference>
<dbReference type="PROSITE" id="PS51722">
    <property type="entry name" value="G_TR_2"/>
    <property type="match status" value="1"/>
</dbReference>
<keyword id="KW-0963">Cytoplasm</keyword>
<keyword id="KW-0251">Elongation factor</keyword>
<keyword id="KW-0342">GTP-binding</keyword>
<keyword id="KW-0547">Nucleotide-binding</keyword>
<keyword id="KW-0648">Protein biosynthesis</keyword>
<keyword id="KW-1185">Reference proteome</keyword>
<gene>
    <name evidence="1" type="primary">fusA</name>
    <name type="ordered locus">Swit_1356</name>
</gene>
<organism>
    <name type="scientific">Rhizorhabdus wittichii (strain DSM 6014 / CCUG 31198 / JCM 15750 / NBRC 105917 / EY 4224 / RW1)</name>
    <name type="common">Sphingomonas wittichii</name>
    <dbReference type="NCBI Taxonomy" id="392499"/>
    <lineage>
        <taxon>Bacteria</taxon>
        <taxon>Pseudomonadati</taxon>
        <taxon>Pseudomonadota</taxon>
        <taxon>Alphaproteobacteria</taxon>
        <taxon>Sphingomonadales</taxon>
        <taxon>Sphingomonadaceae</taxon>
        <taxon>Rhizorhabdus</taxon>
    </lineage>
</organism>
<feature type="chain" id="PRO_1000008884" description="Elongation factor G">
    <location>
        <begin position="1"/>
        <end position="690"/>
    </location>
</feature>
<feature type="domain" description="tr-type G">
    <location>
        <begin position="8"/>
        <end position="283"/>
    </location>
</feature>
<feature type="binding site" evidence="1">
    <location>
        <begin position="17"/>
        <end position="24"/>
    </location>
    <ligand>
        <name>GTP</name>
        <dbReference type="ChEBI" id="CHEBI:37565"/>
    </ligand>
</feature>
<feature type="binding site" evidence="1">
    <location>
        <begin position="81"/>
        <end position="85"/>
    </location>
    <ligand>
        <name>GTP</name>
        <dbReference type="ChEBI" id="CHEBI:37565"/>
    </ligand>
</feature>
<feature type="binding site" evidence="1">
    <location>
        <begin position="135"/>
        <end position="138"/>
    </location>
    <ligand>
        <name>GTP</name>
        <dbReference type="ChEBI" id="CHEBI:37565"/>
    </ligand>
</feature>